<evidence type="ECO:0000250" key="1"/>
<evidence type="ECO:0000255" key="2">
    <source>
        <dbReference type="PROSITE-ProRule" id="PRU00227"/>
    </source>
</evidence>
<evidence type="ECO:0000256" key="3">
    <source>
        <dbReference type="SAM" id="MobiDB-lite"/>
    </source>
</evidence>
<evidence type="ECO:0000305" key="4"/>
<feature type="chain" id="PRO_0000406446" description="Transcription activator of gluconeogenesis Pc22g08580">
    <location>
        <begin position="1"/>
        <end position="694"/>
    </location>
</feature>
<feature type="DNA-binding region" description="Zn(2)-C6 fungal-type" evidence="2">
    <location>
        <begin position="65"/>
        <end position="93"/>
    </location>
</feature>
<feature type="region of interest" description="Disordered" evidence="3">
    <location>
        <begin position="1"/>
        <end position="61"/>
    </location>
</feature>
<feature type="region of interest" description="Disordered" evidence="3">
    <location>
        <begin position="126"/>
        <end position="240"/>
    </location>
</feature>
<feature type="region of interest" description="Disordered" evidence="3">
    <location>
        <begin position="276"/>
        <end position="300"/>
    </location>
</feature>
<feature type="region of interest" description="Disordered" evidence="3">
    <location>
        <begin position="552"/>
        <end position="582"/>
    </location>
</feature>
<feature type="compositionally biased region" description="Basic and acidic residues" evidence="3">
    <location>
        <begin position="17"/>
        <end position="55"/>
    </location>
</feature>
<feature type="compositionally biased region" description="Polar residues" evidence="3">
    <location>
        <begin position="132"/>
        <end position="141"/>
    </location>
</feature>
<feature type="compositionally biased region" description="Low complexity" evidence="3">
    <location>
        <begin position="142"/>
        <end position="171"/>
    </location>
</feature>
<feature type="compositionally biased region" description="Polar residues" evidence="3">
    <location>
        <begin position="172"/>
        <end position="234"/>
    </location>
</feature>
<feature type="compositionally biased region" description="Polar residues" evidence="3">
    <location>
        <begin position="281"/>
        <end position="300"/>
    </location>
</feature>
<feature type="compositionally biased region" description="Polar residues" evidence="3">
    <location>
        <begin position="552"/>
        <end position="581"/>
    </location>
</feature>
<dbReference type="EMBL" id="AM920437">
    <property type="protein sequence ID" value="CAP98146.1"/>
    <property type="molecule type" value="Genomic_DNA"/>
</dbReference>
<dbReference type="RefSeq" id="XP_002564870.1">
    <property type="nucleotide sequence ID" value="XM_002564824.1"/>
</dbReference>
<dbReference type="SMR" id="B6HSQ3"/>
<dbReference type="STRING" id="500485.B6HSQ3"/>
<dbReference type="GeneID" id="8305670"/>
<dbReference type="KEGG" id="pcs:N7525_005383"/>
<dbReference type="VEuPathDB" id="FungiDB:PCH_Pc22g08580"/>
<dbReference type="eggNOG" id="ENOG502R1M5">
    <property type="taxonomic scope" value="Eukaryota"/>
</dbReference>
<dbReference type="HOGENOM" id="CLU_010748_1_0_1"/>
<dbReference type="OMA" id="VMTTCKL"/>
<dbReference type="OrthoDB" id="2538135at2759"/>
<dbReference type="BioCyc" id="PCHR:PC22G08580-MONOMER"/>
<dbReference type="Proteomes" id="UP000000724">
    <property type="component" value="Contig Pc00c22"/>
</dbReference>
<dbReference type="GO" id="GO:0005634">
    <property type="term" value="C:nucleus"/>
    <property type="evidence" value="ECO:0007669"/>
    <property type="project" value="UniProtKB-SubCell"/>
</dbReference>
<dbReference type="GO" id="GO:0000981">
    <property type="term" value="F:DNA-binding transcription factor activity, RNA polymerase II-specific"/>
    <property type="evidence" value="ECO:0007669"/>
    <property type="project" value="InterPro"/>
</dbReference>
<dbReference type="GO" id="GO:0000977">
    <property type="term" value="F:RNA polymerase II transcription regulatory region sequence-specific DNA binding"/>
    <property type="evidence" value="ECO:0007669"/>
    <property type="project" value="TreeGrafter"/>
</dbReference>
<dbReference type="GO" id="GO:0008270">
    <property type="term" value="F:zinc ion binding"/>
    <property type="evidence" value="ECO:0007669"/>
    <property type="project" value="InterPro"/>
</dbReference>
<dbReference type="GO" id="GO:0009267">
    <property type="term" value="P:cellular response to starvation"/>
    <property type="evidence" value="ECO:0007669"/>
    <property type="project" value="TreeGrafter"/>
</dbReference>
<dbReference type="GO" id="GO:0006094">
    <property type="term" value="P:gluconeogenesis"/>
    <property type="evidence" value="ECO:0007669"/>
    <property type="project" value="UniProtKB-KW"/>
</dbReference>
<dbReference type="CDD" id="cd00067">
    <property type="entry name" value="GAL4"/>
    <property type="match status" value="1"/>
</dbReference>
<dbReference type="Gene3D" id="4.10.240.10">
    <property type="entry name" value="Zn(2)-C6 fungal-type DNA-binding domain"/>
    <property type="match status" value="1"/>
</dbReference>
<dbReference type="InterPro" id="IPR050335">
    <property type="entry name" value="ERT1_acuK_gluconeogen_tf"/>
</dbReference>
<dbReference type="InterPro" id="IPR056751">
    <property type="entry name" value="PAS_13"/>
</dbReference>
<dbReference type="InterPro" id="IPR036864">
    <property type="entry name" value="Zn2-C6_fun-type_DNA-bd_sf"/>
</dbReference>
<dbReference type="InterPro" id="IPR001138">
    <property type="entry name" value="Zn2Cys6_DnaBD"/>
</dbReference>
<dbReference type="PANTHER" id="PTHR47659:SF1">
    <property type="entry name" value="TRANSCRIPTION ACTIVATOR OF GLUCONEOGENESIS ERT1"/>
    <property type="match status" value="1"/>
</dbReference>
<dbReference type="PANTHER" id="PTHR47659">
    <property type="entry name" value="ZN(II)2CYS6 TRANSCRIPTION FACTOR (EUROFUNG)-RELATED"/>
    <property type="match status" value="1"/>
</dbReference>
<dbReference type="Pfam" id="PF24990">
    <property type="entry name" value="PAS_13"/>
    <property type="match status" value="1"/>
</dbReference>
<dbReference type="SMART" id="SM00066">
    <property type="entry name" value="GAL4"/>
    <property type="match status" value="1"/>
</dbReference>
<dbReference type="SUPFAM" id="SSF57701">
    <property type="entry name" value="Zn2/Cys6 DNA-binding domain"/>
    <property type="match status" value="1"/>
</dbReference>
<dbReference type="PROSITE" id="PS50048">
    <property type="entry name" value="ZN2_CY6_FUNGAL_2"/>
    <property type="match status" value="1"/>
</dbReference>
<gene>
    <name type="ORF">Pc22g08580</name>
</gene>
<protein>
    <recommendedName>
        <fullName>Transcription activator of gluconeogenesis Pc22g08580</fullName>
    </recommendedName>
</protein>
<organism>
    <name type="scientific">Penicillium rubens (strain ATCC 28089 / DSM 1075 / NRRL 1951 / Wisconsin 54-1255)</name>
    <name type="common">Penicillium chrysogenum</name>
    <dbReference type="NCBI Taxonomy" id="500485"/>
    <lineage>
        <taxon>Eukaryota</taxon>
        <taxon>Fungi</taxon>
        <taxon>Dikarya</taxon>
        <taxon>Ascomycota</taxon>
        <taxon>Pezizomycotina</taxon>
        <taxon>Eurotiomycetes</taxon>
        <taxon>Eurotiomycetidae</taxon>
        <taxon>Eurotiales</taxon>
        <taxon>Aspergillaceae</taxon>
        <taxon>Penicillium</taxon>
        <taxon>Penicillium chrysogenum species complex</taxon>
    </lineage>
</organism>
<comment type="function">
    <text evidence="1">Transcription factor which regulates nonfermentable carbon utilization. Activator of gluconeogenetic genes (By similarity).</text>
</comment>
<comment type="subcellular location">
    <subcellularLocation>
        <location evidence="2">Nucleus</location>
    </subcellularLocation>
</comment>
<comment type="similarity">
    <text evidence="4">Belongs to the ERT1/acuK family.</text>
</comment>
<sequence>MNMETKNGSPVPAGDYSGERDSADITEHEQMDVKPKTNGDSKADRKAANAKDPSRPRRKKARRACFACQRAHLTCGDERPCQRCIKRGLQDACHDGVRKKAKYLHDAPDGALMPAVSSNTNLYNNTLRNNLPISRNGTNAVNSNQQHSQQHPQQPTNPTNNNFYPTPQTQTGSYNPYQESSMGQSPFTTQSPVSPTFNMKSSTNGRNPSLSSTVNQQPTPSTALSGDTSQSQNPFAGPFFDPSDPALFNFDLSSMNFENRYGALEFGMLGHMATGAAGDSPTDSAGQRGSIGRSGSAQFSTPAPGFGESPGNQPFMFGDPLLNEWSAGPASGQHVNVGGVYAPNTMLPEHMKANAPHAFAIESGPASFTSPGSAPSPNIPTAAFDDGPFNNIAPAPKSNSLVPNGQRQVTASILKHPNLQVGPKRRHRNPSSIYESVKEPYAYTSGFHNLTAFIQRRFTPQKTVRIAKALASIRPSFIATTKTLNRDDLIFMEKCFQRTLWEYEDFINACGTPTIVCRRTGEIAAVGKEFSILTGWKKDVLLGKETNLNVNTGGSAVPQSGTTSRGSFTPRGSTLENSGTGRPQPVFLAELLDDDSVVEFYEDFARLAFGDSRGSVMTRCKLLKYKTKEDMEVAQSDDNGKWNNHLRKGGIAGEAGMNQLGFKDGKVDCAYCWTVKRDVFDIPMLIVMNFLPCI</sequence>
<name>ACUK_PENRW</name>
<proteinExistence type="inferred from homology"/>
<accession>B6HSQ3</accession>
<keyword id="KW-0010">Activator</keyword>
<keyword id="KW-0238">DNA-binding</keyword>
<keyword id="KW-0312">Gluconeogenesis</keyword>
<keyword id="KW-0479">Metal-binding</keyword>
<keyword id="KW-0539">Nucleus</keyword>
<keyword id="KW-1185">Reference proteome</keyword>
<keyword id="KW-0804">Transcription</keyword>
<keyword id="KW-0805">Transcription regulation</keyword>
<keyword id="KW-0862">Zinc</keyword>
<reference key="1">
    <citation type="journal article" date="2008" name="Nat. Biotechnol.">
        <title>Genome sequencing and analysis of the filamentous fungus Penicillium chrysogenum.</title>
        <authorList>
            <person name="van den Berg M.A."/>
            <person name="Albang R."/>
            <person name="Albermann K."/>
            <person name="Badger J.H."/>
            <person name="Daran J.-M."/>
            <person name="Driessen A.J.M."/>
            <person name="Garcia-Estrada C."/>
            <person name="Fedorova N.D."/>
            <person name="Harris D.M."/>
            <person name="Heijne W.H.M."/>
            <person name="Joardar V.S."/>
            <person name="Kiel J.A.K.W."/>
            <person name="Kovalchuk A."/>
            <person name="Martin J.F."/>
            <person name="Nierman W.C."/>
            <person name="Nijland J.G."/>
            <person name="Pronk J.T."/>
            <person name="Roubos J.A."/>
            <person name="van der Klei I.J."/>
            <person name="van Peij N.N.M.E."/>
            <person name="Veenhuis M."/>
            <person name="von Doehren H."/>
            <person name="Wagner C."/>
            <person name="Wortman J.R."/>
            <person name="Bovenberg R.A.L."/>
        </authorList>
    </citation>
    <scope>NUCLEOTIDE SEQUENCE [LARGE SCALE GENOMIC DNA]</scope>
    <source>
        <strain>ATCC 28089 / DSM 1075 / NRRL 1951 / Wisconsin 54-1255</strain>
    </source>
</reference>